<comment type="function">
    <text evidence="1">Intrinsically disordered protein that acts as a scaffold, and which is involved in different processes, such as pre-mRNA splicing, transcription regulation, innate immunity and neuron development. Interacts with splicing-related factors via the intrinsically disordered region and regulates alternative splicing of target pre-mRNA species. May suppress the ability of POU3F2 to transactivate the DRD1 gene in a POU3F2 dependent manner. Can activate transcription directly or via association with the transcription machinery. May be involved in ATXN1 mutant-induced cell death. The interaction with ATXN1 mutant reduces levels of phosphorylated RNA polymerase II large subunit. Involved in the assembly of cytoplasmic stress granule, possibly by participating in the transport of neuronal RNA granules. Also acts as an innate immune sensor of infection by retroviruses, by detecting the presence of reverse-transcribed DNA in the cytosol. Directly binds retroviral reverse-transcribed DNA in the cytosol and interacts with CGAS, leading to activate the cGAS-STING signaling pathway, triggering type-I interferon production.</text>
</comment>
<comment type="subunit">
    <text evidence="1">Interacts with POU3F2/Brn-2, ATXN1, TXNL4A, HTT and AR. Interaction with ATXN1 correlates positively with the length of the polyglutamine tract. Interacts with RNA polymerase II large subunit in a phosphorylation-dependent manner. Forms a ternary complex with ATXN1 mutant and phosphorylated RNA polymerase II. Interacts (via C-terminus) with TXNL4A and CD2BP2. Interacts (via WW domain) with ATN1 and SF3B1, and may interact with additional splice factors. Interacts (via WW domain) with WBP11; Leading to reduce interaction between PQBP1 and TXNL4A. Interacts with CAPRIN1. Interacts with DDX1. Interacts with SFPQ. Interacts with KHSRP.</text>
</comment>
<comment type="subcellular location">
    <subcellularLocation>
        <location evidence="1">Nucleus</location>
    </subcellularLocation>
    <subcellularLocation>
        <location evidence="2">Nucleus speckle</location>
    </subcellularLocation>
    <subcellularLocation>
        <location evidence="1">Cytoplasmic granule</location>
    </subcellularLocation>
    <text evidence="1 2">Colocalizes with SRSF2 in nuclear speckles (By similarity). Colocalized with POU3F2. Colocalized with ATXN1 in nuclear inclusion bodies. Localizes to cytoplasmic stress granules (By similarity).</text>
</comment>
<comment type="domain">
    <text evidence="1">The WW domain may play a role as a transcriptional activator directly or via association with the transcription machinery. The WW domain mediates interaction with WBP11, ATN1, SF3B1 and the C-terminal domain of the RNA polymerase II large subunit.</text>
</comment>
<comment type="domain">
    <text evidence="1">Except for the WW domain, the protein is intrinsically disordered.</text>
</comment>
<name>PQBP1_BOVIN</name>
<evidence type="ECO:0000250" key="1">
    <source>
        <dbReference type="UniProtKB" id="O60828"/>
    </source>
</evidence>
<evidence type="ECO:0000250" key="2">
    <source>
        <dbReference type="UniProtKB" id="Q91VJ5"/>
    </source>
</evidence>
<evidence type="ECO:0000255" key="3">
    <source>
        <dbReference type="PROSITE-ProRule" id="PRU00224"/>
    </source>
</evidence>
<evidence type="ECO:0000256" key="4">
    <source>
        <dbReference type="SAM" id="MobiDB-lite"/>
    </source>
</evidence>
<proteinExistence type="evidence at transcript level"/>
<organism>
    <name type="scientific">Bos taurus</name>
    <name type="common">Bovine</name>
    <dbReference type="NCBI Taxonomy" id="9913"/>
    <lineage>
        <taxon>Eukaryota</taxon>
        <taxon>Metazoa</taxon>
        <taxon>Chordata</taxon>
        <taxon>Craniata</taxon>
        <taxon>Vertebrata</taxon>
        <taxon>Euteleostomi</taxon>
        <taxon>Mammalia</taxon>
        <taxon>Eutheria</taxon>
        <taxon>Laurasiatheria</taxon>
        <taxon>Artiodactyla</taxon>
        <taxon>Ruminantia</taxon>
        <taxon>Pecora</taxon>
        <taxon>Bovidae</taxon>
        <taxon>Bovinae</taxon>
        <taxon>Bos</taxon>
    </lineage>
</organism>
<keyword id="KW-0391">Immunity</keyword>
<keyword id="KW-0399">Innate immunity</keyword>
<keyword id="KW-0507">mRNA processing</keyword>
<keyword id="KW-0508">mRNA splicing</keyword>
<keyword id="KW-0539">Nucleus</keyword>
<keyword id="KW-0597">Phosphoprotein</keyword>
<keyword id="KW-1185">Reference proteome</keyword>
<keyword id="KW-0677">Repeat</keyword>
<keyword id="KW-0804">Transcription</keyword>
<keyword id="KW-0805">Transcription regulation</keyword>
<protein>
    <recommendedName>
        <fullName>Polyglutamine-binding protein 1</fullName>
        <shortName>PQBP-1</shortName>
    </recommendedName>
    <alternativeName>
        <fullName>Polyglutamine tract-binding protein 1</fullName>
    </alternativeName>
</protein>
<reference key="1">
    <citation type="submission" date="2005-09" db="EMBL/GenBank/DDBJ databases">
        <authorList>
            <consortium name="NIH - Mammalian Gene Collection (MGC) project"/>
        </authorList>
    </citation>
    <scope>NUCLEOTIDE SEQUENCE [LARGE SCALE MRNA]</scope>
    <source>
        <strain>Hereford</strain>
        <tissue>Ascending colon</tissue>
    </source>
</reference>
<gene>
    <name type="primary">PQBP1</name>
</gene>
<dbReference type="EMBL" id="BC105573">
    <property type="protein sequence ID" value="AAI05574.1"/>
    <property type="molecule type" value="mRNA"/>
</dbReference>
<dbReference type="RefSeq" id="NP_001039854.1">
    <property type="nucleotide sequence ID" value="NM_001046389.1"/>
</dbReference>
<dbReference type="RefSeq" id="XP_005228202.1">
    <property type="nucleotide sequence ID" value="XM_005228145.5"/>
</dbReference>
<dbReference type="RefSeq" id="XP_005228203.1">
    <property type="nucleotide sequence ID" value="XM_005228146.3"/>
</dbReference>
<dbReference type="RefSeq" id="XP_005228204.1">
    <property type="nucleotide sequence ID" value="XM_005228147.3"/>
</dbReference>
<dbReference type="RefSeq" id="XP_005228208.1">
    <property type="nucleotide sequence ID" value="XM_005228151.5"/>
</dbReference>
<dbReference type="RefSeq" id="XP_024843895.1">
    <property type="nucleotide sequence ID" value="XM_024988127.2"/>
</dbReference>
<dbReference type="RefSeq" id="XP_059739467.1">
    <property type="nucleotide sequence ID" value="XM_059883484.1"/>
</dbReference>
<dbReference type="SMR" id="Q2HJC9"/>
<dbReference type="FunCoup" id="Q2HJC9">
    <property type="interactions" value="3003"/>
</dbReference>
<dbReference type="STRING" id="9913.ENSBTAP00000024621"/>
<dbReference type="PaxDb" id="9913-ENSBTAP00000024621"/>
<dbReference type="GeneID" id="534894"/>
<dbReference type="KEGG" id="bta:534894"/>
<dbReference type="CTD" id="10084"/>
<dbReference type="VEuPathDB" id="HostDB:ENSBTAG00000018498"/>
<dbReference type="eggNOG" id="KOG3427">
    <property type="taxonomic scope" value="Eukaryota"/>
</dbReference>
<dbReference type="HOGENOM" id="CLU_043596_1_0_1"/>
<dbReference type="InParanoid" id="Q2HJC9"/>
<dbReference type="OMA" id="IYHECSK"/>
<dbReference type="OrthoDB" id="42462at2759"/>
<dbReference type="TreeFam" id="TF320689"/>
<dbReference type="Reactome" id="R-BTA-72163">
    <property type="pathway name" value="mRNA Splicing - Major Pathway"/>
</dbReference>
<dbReference type="Proteomes" id="UP000009136">
    <property type="component" value="Chromosome X"/>
</dbReference>
<dbReference type="Bgee" id="ENSBTAG00000018498">
    <property type="expression patterns" value="Expressed in laryngeal cartilage and 104 other cell types or tissues"/>
</dbReference>
<dbReference type="GO" id="GO:0005737">
    <property type="term" value="C:cytoplasm"/>
    <property type="evidence" value="ECO:0000318"/>
    <property type="project" value="GO_Central"/>
</dbReference>
<dbReference type="GO" id="GO:0016604">
    <property type="term" value="C:nuclear body"/>
    <property type="evidence" value="ECO:0000318"/>
    <property type="project" value="GO_Central"/>
</dbReference>
<dbReference type="GO" id="GO:0016607">
    <property type="term" value="C:nuclear speck"/>
    <property type="evidence" value="ECO:0000250"/>
    <property type="project" value="UniProtKB"/>
</dbReference>
<dbReference type="GO" id="GO:0003690">
    <property type="term" value="F:double-stranded DNA binding"/>
    <property type="evidence" value="ECO:0000250"/>
    <property type="project" value="UniProtKB"/>
</dbReference>
<dbReference type="GO" id="GO:0043021">
    <property type="term" value="F:ribonucleoprotein complex binding"/>
    <property type="evidence" value="ECO:0000318"/>
    <property type="project" value="GO_Central"/>
</dbReference>
<dbReference type="GO" id="GO:0002218">
    <property type="term" value="P:activation of innate immune response"/>
    <property type="evidence" value="ECO:0000250"/>
    <property type="project" value="UniProtKB"/>
</dbReference>
<dbReference type="GO" id="GO:0000380">
    <property type="term" value="P:alternative mRNA splicing, via spliceosome"/>
    <property type="evidence" value="ECO:0000250"/>
    <property type="project" value="UniProtKB"/>
</dbReference>
<dbReference type="GO" id="GO:0071360">
    <property type="term" value="P:cellular response to exogenous dsRNA"/>
    <property type="evidence" value="ECO:0000250"/>
    <property type="project" value="UniProtKB"/>
</dbReference>
<dbReference type="GO" id="GO:0051607">
    <property type="term" value="P:defense response to virus"/>
    <property type="evidence" value="ECO:0000250"/>
    <property type="project" value="UniProtKB"/>
</dbReference>
<dbReference type="GO" id="GO:0045087">
    <property type="term" value="P:innate immune response"/>
    <property type="evidence" value="ECO:0007669"/>
    <property type="project" value="UniProtKB-KW"/>
</dbReference>
<dbReference type="GO" id="GO:0031175">
    <property type="term" value="P:neuron projection development"/>
    <property type="evidence" value="ECO:0000250"/>
    <property type="project" value="UniProtKB"/>
</dbReference>
<dbReference type="GO" id="GO:0002230">
    <property type="term" value="P:positive regulation of defense response to virus by host"/>
    <property type="evidence" value="ECO:0000250"/>
    <property type="project" value="UniProtKB"/>
</dbReference>
<dbReference type="GO" id="GO:0032481">
    <property type="term" value="P:positive regulation of type I interferon production"/>
    <property type="evidence" value="ECO:0000250"/>
    <property type="project" value="UniProtKB"/>
</dbReference>
<dbReference type="FunFam" id="3.40.30.10:FF:000140">
    <property type="entry name" value="polyglutamine-binding protein 1 isoform X1"/>
    <property type="match status" value="1"/>
</dbReference>
<dbReference type="Gene3D" id="2.20.70.10">
    <property type="match status" value="1"/>
</dbReference>
<dbReference type="Gene3D" id="3.40.30.10">
    <property type="entry name" value="Glutaredoxin"/>
    <property type="match status" value="1"/>
</dbReference>
<dbReference type="InterPro" id="IPR001202">
    <property type="entry name" value="WW_dom"/>
</dbReference>
<dbReference type="InterPro" id="IPR036020">
    <property type="entry name" value="WW_dom_sf"/>
</dbReference>
<dbReference type="PANTHER" id="PTHR21737">
    <property type="entry name" value="POLYGLUTAMINE BINDING PROTEIN 1/MARVEL MEMBRANE-ASSOCIATING DOMAIN CONTAINING 3"/>
    <property type="match status" value="1"/>
</dbReference>
<dbReference type="PANTHER" id="PTHR21737:SF3">
    <property type="entry name" value="POLYGLUTAMINE-BINDING PROTEIN 1"/>
    <property type="match status" value="1"/>
</dbReference>
<dbReference type="SMART" id="SM00456">
    <property type="entry name" value="WW"/>
    <property type="match status" value="1"/>
</dbReference>
<dbReference type="SUPFAM" id="SSF51045">
    <property type="entry name" value="WW domain"/>
    <property type="match status" value="1"/>
</dbReference>
<dbReference type="PROSITE" id="PS50020">
    <property type="entry name" value="WW_DOMAIN_2"/>
    <property type="match status" value="1"/>
</dbReference>
<accession>Q2HJC9</accession>
<sequence length="263" mass="30346">MPLPVALQTRLAKRGILKHLEPEPEEEIIAEDYDDDPVDYEATRLEGLPPSWYKVFDPSCGLPYYWNVDTDLVSWLSPHDPNSVVTKSAKKLRSSNADAEEKLDRSHEKSDRGHEKSDRGHEKSDRSHEKSERNHEKSDRDRERGYDKVDRERERDRDRDRGYDKVDREESKERRHHRREELAPYPKSKKAASRKDEELDPMDPSSYSDAPRGTWSTGLPKRNEAKTGADTTAAGPLFQQRPYPSPGAVLRANAEASRTKQQD</sequence>
<feature type="chain" id="PRO_0000285495" description="Polyglutamine-binding protein 1">
    <location>
        <begin position="1"/>
        <end position="263"/>
    </location>
</feature>
<feature type="domain" description="WW" evidence="3">
    <location>
        <begin position="46"/>
        <end position="80"/>
    </location>
</feature>
<feature type="repeat" description="1-1">
    <location>
        <begin position="104"/>
        <end position="110"/>
    </location>
</feature>
<feature type="repeat" description="1-2">
    <location>
        <begin position="111"/>
        <end position="117"/>
    </location>
</feature>
<feature type="repeat" description="1-3">
    <location>
        <begin position="118"/>
        <end position="124"/>
    </location>
</feature>
<feature type="repeat" description="1-4">
    <location>
        <begin position="125"/>
        <end position="131"/>
    </location>
</feature>
<feature type="repeat" description="1-5">
    <location>
        <begin position="132"/>
        <end position="138"/>
    </location>
</feature>
<feature type="repeat" description="2-1">
    <location>
        <begin position="139"/>
        <end position="140"/>
    </location>
</feature>
<feature type="repeat" description="2-2">
    <location>
        <begin position="141"/>
        <end position="142"/>
    </location>
</feature>
<feature type="repeat" description="2-3">
    <location>
        <begin position="143"/>
        <end position="144"/>
    </location>
</feature>
<feature type="repeat" description="3-1">
    <location>
        <begin position="150"/>
        <end position="151"/>
    </location>
</feature>
<feature type="repeat" description="3-2">
    <location>
        <begin position="152"/>
        <end position="153"/>
    </location>
</feature>
<feature type="repeat" description="3-3">
    <location>
        <begin position="154"/>
        <end position="155"/>
    </location>
</feature>
<feature type="repeat" description="3-4">
    <location>
        <begin position="156"/>
        <end position="157"/>
    </location>
</feature>
<feature type="repeat" description="3-5">
    <location>
        <begin position="158"/>
        <end position="159"/>
    </location>
</feature>
<feature type="repeat" description="3-6">
    <location>
        <begin position="160"/>
        <end position="161"/>
    </location>
</feature>
<feature type="region of interest" description="Disordered" evidence="1">
    <location>
        <begin position="94"/>
        <end position="263"/>
    </location>
</feature>
<feature type="region of interest" description="5 X 7 AA approximate tandem repeats of D-R-[SG]-H-D-K-S">
    <location>
        <begin position="104"/>
        <end position="138"/>
    </location>
</feature>
<feature type="region of interest" description="3 X 2 AA tandem repeats of [DE]-R">
    <location>
        <begin position="139"/>
        <end position="144"/>
    </location>
</feature>
<feature type="region of interest" description="6 X 2 AA tandem repeats of [DE]-R">
    <location>
        <begin position="150"/>
        <end position="161"/>
    </location>
</feature>
<feature type="region of interest" description="Important for interaction with TXNL4A" evidence="1">
    <location>
        <begin position="243"/>
        <end position="253"/>
    </location>
</feature>
<feature type="compositionally biased region" description="Basic and acidic residues" evidence="4">
    <location>
        <begin position="99"/>
        <end position="173"/>
    </location>
</feature>
<feature type="modified residue" description="Phosphoserine" evidence="1">
    <location>
        <position position="94"/>
    </location>
</feature>
<feature type="modified residue" description="Phosphoserine" evidence="1">
    <location>
        <position position="245"/>
    </location>
</feature>